<reference key="1">
    <citation type="submission" date="2006-05" db="EMBL/GenBank/DDBJ databases">
        <title>Generation and analysis of cDNA sequences derived from a porcine skeletal muscle library.</title>
        <authorList>
            <person name="Cai G."/>
            <person name="Chen Y."/>
            <person name="Wang C."/>
            <person name="Li J."/>
            <person name="Peng G."/>
            <person name="Zhang H."/>
        </authorList>
    </citation>
    <scope>NUCLEOTIDE SEQUENCE [LARGE SCALE MRNA]</scope>
    <source>
        <tissue>Longissimus dorsi muscle</tissue>
    </source>
</reference>
<name>AT5G1_PIG</name>
<feature type="transit peptide" description="Mitochondrion">
    <location>
        <begin position="1"/>
        <end position="61"/>
    </location>
</feature>
<feature type="chain" id="PRO_0000296386" description="ATP synthase F(0) complex subunit C1, mitochondrial">
    <location>
        <begin position="62"/>
        <end position="136"/>
    </location>
</feature>
<feature type="transmembrane region" description="Helical" evidence="3">
    <location>
        <begin position="77"/>
        <end position="97"/>
    </location>
</feature>
<feature type="transmembrane region" description="Helical" evidence="3">
    <location>
        <begin position="112"/>
        <end position="132"/>
    </location>
</feature>
<feature type="site" description="Reversibly protonated during proton transport" evidence="1">
    <location>
        <position position="119"/>
    </location>
</feature>
<feature type="modified residue" description="N6,N6,N6-trimethyllysine" evidence="2">
    <location>
        <position position="104"/>
    </location>
</feature>
<organism>
    <name type="scientific">Sus scrofa</name>
    <name type="common">Pig</name>
    <dbReference type="NCBI Taxonomy" id="9823"/>
    <lineage>
        <taxon>Eukaryota</taxon>
        <taxon>Metazoa</taxon>
        <taxon>Chordata</taxon>
        <taxon>Craniata</taxon>
        <taxon>Vertebrata</taxon>
        <taxon>Euteleostomi</taxon>
        <taxon>Mammalia</taxon>
        <taxon>Eutheria</taxon>
        <taxon>Laurasiatheria</taxon>
        <taxon>Artiodactyla</taxon>
        <taxon>Suina</taxon>
        <taxon>Suidae</taxon>
        <taxon>Sus</taxon>
    </lineage>
</organism>
<comment type="function">
    <text evidence="2">Subunit c, of the mitochondrial membrane ATP synthase complex (F(1)F(0) ATP synthase or Complex V) that produces ATP from ADP in the presence of a proton gradient across the membrane which is generated by electron transport complexes of the respiratory chain. ATP synthase complex consist of a soluble F(1) head domain - the catalytic core - and a membrane F(1) domain - the membrane proton channel. These two domains are linked by a central stalk rotating inside the F(1) region and a stationary peripheral stalk. During catalysis, ATP synthesis in the catalytic domain of F(1) is coupled via a rotary mechanism of the central stalk subunits to proton translocation. With the subunit a (MT-ATP6), forms the proton-conducting channel in the F(0) domain, that contains two crucial half-channels (inlet and outlet) that facilitate proton movement from the mitochondrial intermembrane space (IMS) into the matrix. Protons are taken up via the inlet half-channel and released through the outlet half-channel, following a Grotthuss mechanism.</text>
</comment>
<comment type="catalytic activity">
    <reaction evidence="2">
        <text>H(+)(in) = H(+)(out)</text>
        <dbReference type="Rhea" id="RHEA:34979"/>
        <dbReference type="ChEBI" id="CHEBI:15378"/>
    </reaction>
</comment>
<comment type="subunit">
    <text evidence="2">Homooctamer; the c-ring consists of eight c subunits forming a circle, and each subunit adopts a hairpin shape. Component of the ATP synthase complex composed at least of ATP5F1A/subunit alpha, ATP5F1B/subunit beta, ATP5MC1/subunit c (homooctomer), MT-ATP6/subunit a, MT-ATP8/subunit 8, ATP5ME/subunit e, ATP5MF/subunit f, ATP5MG/subunit g, ATP5MK/subunit k, ATP5MJ/subunit j, ATP5F1C/subunit gamma, ATP5F1D/subunit delta, ATP5F1E/subunit epsilon, ATP5PF/subunit F6, ATP5PB/subunit b, ATP5PD/subunit d, ATP5PO/subunit OSCP. ATP synthase complex consists of a soluble F(1) head domain (subunits alpha(3) and beta(3)) - the catalytic core - and a membrane F(0) domain - the membrane proton channel (subunits c, a, 8, e, f, g, k and j). These two domains are linked by a central stalk (subunits gamma, delta, and epsilon) rotating inside the F1 region and a stationary peripheral stalk (subunits F6, b, d, and OSCP). Interacts with TMEM70 (homooligomer form); this interaction facilitates the oligomer formation of subunit c/ATP5MC1 (c-ring) and the c-ring membrane insertion and also protects ATP5MC1 against intramitochondrial proteolysis.</text>
</comment>
<comment type="subcellular location">
    <subcellularLocation>
        <location>Mitochondrion membrane</location>
        <topology>Multi-pass membrane protein</topology>
    </subcellularLocation>
</comment>
<comment type="PTM">
    <text evidence="2">Trimethylated by ATPSCKMT at Lys-104. Methylation is required for proper incorporation of the C subunit into the ATP synthase complex and mitochondrial respiration.</text>
</comment>
<comment type="disease">
    <text>This protein is the major protein stored in the storage bodies of animals or humans affected with ceroid lipofuscinosis (Batten disease).</text>
</comment>
<comment type="miscellaneous">
    <text>There are three genes which encode the ATP synthase proteolipid and they specify precursors with different import sequences but identical mature proteins.</text>
</comment>
<comment type="similarity">
    <text evidence="4">Belongs to the ATPase C chain family.</text>
</comment>
<gene>
    <name evidence="2" type="primary">ATP5MC1</name>
    <name type="synonym">ATP5G1</name>
</gene>
<sequence>MQTTGALLISPALLRSCTRGLIRPVSASFLSRPEIPSEQPPCSSVPLQVARREFQTSVVSRDIDTAAKFIGAGAATVGVAGSGAGIGTVFGSLIIGYARNPSLKQQLFSYAILGFALFEAMGLFCLMVAFLILFAM</sequence>
<accession>A1XQS5</accession>
<keyword id="KW-0138">CF(0)</keyword>
<keyword id="KW-0375">Hydrogen ion transport</keyword>
<keyword id="KW-0406">Ion transport</keyword>
<keyword id="KW-0446">Lipid-binding</keyword>
<keyword id="KW-0472">Membrane</keyword>
<keyword id="KW-0488">Methylation</keyword>
<keyword id="KW-0496">Mitochondrion</keyword>
<keyword id="KW-1185">Reference proteome</keyword>
<keyword id="KW-0809">Transit peptide</keyword>
<keyword id="KW-0812">Transmembrane</keyword>
<keyword id="KW-1133">Transmembrane helix</keyword>
<keyword id="KW-0813">Transport</keyword>
<evidence type="ECO:0000250" key="1"/>
<evidence type="ECO:0000250" key="2">
    <source>
        <dbReference type="UniProtKB" id="P05496"/>
    </source>
</evidence>
<evidence type="ECO:0000255" key="3"/>
<evidence type="ECO:0000305" key="4"/>
<protein>
    <recommendedName>
        <fullName evidence="2">ATP synthase F(0) complex subunit C1, mitochondrial</fullName>
    </recommendedName>
    <alternativeName>
        <fullName>ATP synthase lipid-binding protein</fullName>
    </alternativeName>
    <alternativeName>
        <fullName evidence="2">ATP synthase membrane subunit c locus 1</fullName>
    </alternativeName>
    <alternativeName>
        <fullName>ATP synthase proteolipid P1</fullName>
    </alternativeName>
    <alternativeName>
        <fullName>ATPase protein 9</fullName>
    </alternativeName>
    <alternativeName>
        <fullName>ATPase subunit c</fullName>
    </alternativeName>
    <alternativeName>
        <fullName evidence="2">Proton-conducting channel, ATP synthase F(0) complex subunit c</fullName>
    </alternativeName>
</protein>
<dbReference type="EMBL" id="DQ629147">
    <property type="protein sequence ID" value="ABK55631.1"/>
    <property type="molecule type" value="mRNA"/>
</dbReference>
<dbReference type="SMR" id="A1XQS5"/>
<dbReference type="FunCoup" id="A1XQS5">
    <property type="interactions" value="252"/>
</dbReference>
<dbReference type="STRING" id="9823.ENSSSCP00000063108"/>
<dbReference type="PaxDb" id="9823-ENSSSCP00000018592"/>
<dbReference type="PeptideAtlas" id="A1XQS5"/>
<dbReference type="eggNOG" id="KOG3025">
    <property type="taxonomic scope" value="Eukaryota"/>
</dbReference>
<dbReference type="InParanoid" id="A1XQS5"/>
<dbReference type="Proteomes" id="UP000008227">
    <property type="component" value="Unplaced"/>
</dbReference>
<dbReference type="Proteomes" id="UP000314985">
    <property type="component" value="Unplaced"/>
</dbReference>
<dbReference type="Proteomes" id="UP000694570">
    <property type="component" value="Unplaced"/>
</dbReference>
<dbReference type="Proteomes" id="UP000694571">
    <property type="component" value="Unplaced"/>
</dbReference>
<dbReference type="Proteomes" id="UP000694720">
    <property type="component" value="Unplaced"/>
</dbReference>
<dbReference type="Proteomes" id="UP000694722">
    <property type="component" value="Unplaced"/>
</dbReference>
<dbReference type="Proteomes" id="UP000694723">
    <property type="component" value="Unplaced"/>
</dbReference>
<dbReference type="Proteomes" id="UP000694724">
    <property type="component" value="Unplaced"/>
</dbReference>
<dbReference type="Proteomes" id="UP000694725">
    <property type="component" value="Unplaced"/>
</dbReference>
<dbReference type="Proteomes" id="UP000694726">
    <property type="component" value="Unplaced"/>
</dbReference>
<dbReference type="Proteomes" id="UP000694727">
    <property type="component" value="Unplaced"/>
</dbReference>
<dbReference type="Proteomes" id="UP000694728">
    <property type="component" value="Unplaced"/>
</dbReference>
<dbReference type="GO" id="GO:0031966">
    <property type="term" value="C:mitochondrial membrane"/>
    <property type="evidence" value="ECO:0007669"/>
    <property type="project" value="UniProtKB-SubCell"/>
</dbReference>
<dbReference type="GO" id="GO:0045259">
    <property type="term" value="C:proton-transporting ATP synthase complex"/>
    <property type="evidence" value="ECO:0000250"/>
    <property type="project" value="UniProtKB"/>
</dbReference>
<dbReference type="GO" id="GO:0033177">
    <property type="term" value="C:proton-transporting two-sector ATPase complex, proton-transporting domain"/>
    <property type="evidence" value="ECO:0007669"/>
    <property type="project" value="InterPro"/>
</dbReference>
<dbReference type="GO" id="GO:0008289">
    <property type="term" value="F:lipid binding"/>
    <property type="evidence" value="ECO:0007669"/>
    <property type="project" value="UniProtKB-KW"/>
</dbReference>
<dbReference type="GO" id="GO:0015252">
    <property type="term" value="F:proton channel activity"/>
    <property type="evidence" value="ECO:0000250"/>
    <property type="project" value="UniProtKB"/>
</dbReference>
<dbReference type="GO" id="GO:0015986">
    <property type="term" value="P:proton motive force-driven ATP synthesis"/>
    <property type="evidence" value="ECO:0000250"/>
    <property type="project" value="UniProtKB"/>
</dbReference>
<dbReference type="GO" id="GO:1902600">
    <property type="term" value="P:proton transmembrane transport"/>
    <property type="evidence" value="ECO:0000250"/>
    <property type="project" value="UniProtKB"/>
</dbReference>
<dbReference type="CDD" id="cd18182">
    <property type="entry name" value="ATP-synt_Fo_c_ATP5G3"/>
    <property type="match status" value="1"/>
</dbReference>
<dbReference type="FunFam" id="1.20.20.10:FF:000003">
    <property type="entry name" value="Atp synthase f complex subunit mitochondrial"/>
    <property type="match status" value="1"/>
</dbReference>
<dbReference type="Gene3D" id="1.20.20.10">
    <property type="entry name" value="F1F0 ATP synthase subunit C"/>
    <property type="match status" value="1"/>
</dbReference>
<dbReference type="HAMAP" id="MF_01396">
    <property type="entry name" value="ATP_synth_c_bact"/>
    <property type="match status" value="1"/>
</dbReference>
<dbReference type="InterPro" id="IPR000454">
    <property type="entry name" value="ATP_synth_F0_csu"/>
</dbReference>
<dbReference type="InterPro" id="IPR020537">
    <property type="entry name" value="ATP_synth_F0_csu_DDCD_BS"/>
</dbReference>
<dbReference type="InterPro" id="IPR038662">
    <property type="entry name" value="ATP_synth_F0_csu_sf"/>
</dbReference>
<dbReference type="InterPro" id="IPR002379">
    <property type="entry name" value="ATPase_proteolipid_c-like_dom"/>
</dbReference>
<dbReference type="InterPro" id="IPR035921">
    <property type="entry name" value="F/V-ATP_Csub_sf"/>
</dbReference>
<dbReference type="PANTHER" id="PTHR10031:SF32">
    <property type="entry name" value="ATP SYNTHASE LIPID-BINDING PROTEIN"/>
    <property type="match status" value="1"/>
</dbReference>
<dbReference type="PANTHER" id="PTHR10031">
    <property type="entry name" value="ATP SYNTHASE LIPID-BINDING PROTEIN, MITOCHONDRIAL"/>
    <property type="match status" value="1"/>
</dbReference>
<dbReference type="Pfam" id="PF00137">
    <property type="entry name" value="ATP-synt_C"/>
    <property type="match status" value="1"/>
</dbReference>
<dbReference type="PRINTS" id="PR00124">
    <property type="entry name" value="ATPASEC"/>
</dbReference>
<dbReference type="SUPFAM" id="SSF81333">
    <property type="entry name" value="F1F0 ATP synthase subunit C"/>
    <property type="match status" value="1"/>
</dbReference>
<dbReference type="PROSITE" id="PS00605">
    <property type="entry name" value="ATPASE_C"/>
    <property type="match status" value="1"/>
</dbReference>
<proteinExistence type="evidence at transcript level"/>